<organism>
    <name type="scientific">Acanthamoeba polyphaga mimivirus</name>
    <name type="common">APMV</name>
    <dbReference type="NCBI Taxonomy" id="212035"/>
    <lineage>
        <taxon>Viruses</taxon>
        <taxon>Varidnaviria</taxon>
        <taxon>Bamfordvirae</taxon>
        <taxon>Nucleocytoviricota</taxon>
        <taxon>Megaviricetes</taxon>
        <taxon>Imitervirales</taxon>
        <taxon>Mimiviridae</taxon>
        <taxon>Megamimivirinae</taxon>
        <taxon>Mimivirus</taxon>
        <taxon>Mimivirus bradfordmassiliense</taxon>
    </lineage>
</organism>
<reference key="1">
    <citation type="journal article" date="2004" name="Science">
        <title>The 1.2-megabase genome sequence of Mimivirus.</title>
        <authorList>
            <person name="Raoult D."/>
            <person name="Audic S."/>
            <person name="Robert C."/>
            <person name="Abergel C."/>
            <person name="Renesto P."/>
            <person name="Ogata H."/>
            <person name="La Scola B."/>
            <person name="Susan M."/>
            <person name="Claverie J.-M."/>
        </authorList>
    </citation>
    <scope>NUCLEOTIDE SEQUENCE [GENOMIC DNA]</scope>
    <source>
        <strain>Rowbotham-Bradford</strain>
    </source>
</reference>
<comment type="catalytic activity">
    <reaction>
        <text>a 2'-deoxyribonucleoside 5'-phosphate + ATP = a 2'-deoxyribonucleoside 5'-diphosphate + ADP</text>
        <dbReference type="Rhea" id="RHEA:11216"/>
        <dbReference type="ChEBI" id="CHEBI:30616"/>
        <dbReference type="ChEBI" id="CHEBI:65317"/>
        <dbReference type="ChEBI" id="CHEBI:73316"/>
        <dbReference type="ChEBI" id="CHEBI:456216"/>
        <dbReference type="EC" id="2.7.4.13"/>
    </reaction>
</comment>
<comment type="similarity">
    <text evidence="2">Belongs to the dNMP kinase family.</text>
</comment>
<gene>
    <name type="ordered locus">MIMI_R512</name>
</gene>
<organismHost>
    <name type="scientific">Acanthamoeba polyphaga</name>
    <name type="common">Amoeba</name>
    <dbReference type="NCBI Taxonomy" id="5757"/>
</organismHost>
<evidence type="ECO:0000250" key="1">
    <source>
        <dbReference type="UniProtKB" id="P04531"/>
    </source>
</evidence>
<evidence type="ECO:0000305" key="2"/>
<proteinExistence type="inferred from homology"/>
<dbReference type="EC" id="2.7.4.13" evidence="1"/>
<dbReference type="EMBL" id="AY653733">
    <property type="protein sequence ID" value="AAV50776.1"/>
    <property type="molecule type" value="Genomic_DNA"/>
</dbReference>
<dbReference type="SMR" id="Q5UQ70"/>
<dbReference type="KEGG" id="vg:9925143"/>
<dbReference type="OrthoDB" id="9152at10239"/>
<dbReference type="Proteomes" id="UP000001134">
    <property type="component" value="Genome"/>
</dbReference>
<dbReference type="GO" id="GO:0005524">
    <property type="term" value="F:ATP binding"/>
    <property type="evidence" value="ECO:0007669"/>
    <property type="project" value="UniProtKB-KW"/>
</dbReference>
<dbReference type="GO" id="GO:0047507">
    <property type="term" value="F:deoxynucleoside-phosphate kinase activity, ATP as phosphate donor"/>
    <property type="evidence" value="ECO:0007669"/>
    <property type="project" value="UniProtKB-EC"/>
</dbReference>
<dbReference type="Gene3D" id="3.40.50.300">
    <property type="entry name" value="P-loop containing nucleotide triphosphate hydrolases"/>
    <property type="match status" value="1"/>
</dbReference>
<dbReference type="InterPro" id="IPR048444">
    <property type="entry name" value="DNMK"/>
</dbReference>
<dbReference type="InterPro" id="IPR027417">
    <property type="entry name" value="P-loop_NTPase"/>
</dbReference>
<dbReference type="Pfam" id="PF21448">
    <property type="entry name" value="DNMK"/>
    <property type="match status" value="1"/>
</dbReference>
<dbReference type="SUPFAM" id="SSF52540">
    <property type="entry name" value="P-loop containing nucleoside triphosphate hydrolases"/>
    <property type="match status" value="1"/>
</dbReference>
<name>DNMK_MIMIV</name>
<protein>
    <recommendedName>
        <fullName>Putative deoxynucleotide monophosphate kinase</fullName>
        <shortName>DNK</shortName>
        <shortName>dNMP kinase</shortName>
        <ecNumber evidence="1">2.7.4.13</ecNumber>
    </recommendedName>
</protein>
<sequence length="193" mass="22106">MVLIGLMGGKGSGKTTAASYLIDRLGFIEKSFADPLKKACKELFLLSDEQIYGTQEQKETPDDRWFGCTPRKMLQYVGTDLLRDYLDNIMPGLHKNIFTHHFRLWYRDLMMKNPHACVVISDVRFQNEADFIKELGGYLIKIDRPGIASDDTHPSEVELRSIKSYDIVLVNNKTIEEFYSQIISCVDNASQMN</sequence>
<accession>Q5UQ70</accession>
<feature type="chain" id="PRO_0000253459" description="Putative deoxynucleotide monophosphate kinase">
    <location>
        <begin position="1"/>
        <end position="193"/>
    </location>
</feature>
<feature type="binding site" evidence="1">
    <location>
        <position position="10"/>
    </location>
    <ligand>
        <name>dGMP</name>
        <dbReference type="ChEBI" id="CHEBI:57673"/>
    </ligand>
</feature>
<feature type="binding site" evidence="1">
    <location>
        <position position="13"/>
    </location>
    <ligand>
        <name>ATP</name>
        <dbReference type="ChEBI" id="CHEBI:30616"/>
    </ligand>
</feature>
<feature type="binding site" evidence="1">
    <location>
        <position position="16"/>
    </location>
    <ligand>
        <name>ATP</name>
        <dbReference type="ChEBI" id="CHEBI:30616"/>
    </ligand>
</feature>
<feature type="binding site" evidence="1">
    <location>
        <position position="36"/>
    </location>
    <ligand>
        <name>dGMP</name>
        <dbReference type="ChEBI" id="CHEBI:57673"/>
    </ligand>
</feature>
<feature type="binding site" evidence="1">
    <location>
        <position position="37"/>
    </location>
    <ligand>
        <name>dGMP</name>
        <dbReference type="ChEBI" id="CHEBI:57673"/>
    </ligand>
</feature>
<feature type="binding site" evidence="1">
    <location>
        <position position="58"/>
    </location>
    <ligand>
        <name>dGMP</name>
        <dbReference type="ChEBI" id="CHEBI:57673"/>
    </ligand>
</feature>
<feature type="binding site" evidence="1">
    <location>
        <position position="122"/>
    </location>
    <ligand>
        <name>dGMP</name>
        <dbReference type="ChEBI" id="CHEBI:57673"/>
    </ligand>
</feature>
<feature type="binding site" evidence="1">
    <location>
        <position position="124"/>
    </location>
    <ligand>
        <name>dGMP</name>
        <dbReference type="ChEBI" id="CHEBI:57673"/>
    </ligand>
</feature>
<feature type="binding site" evidence="1">
    <location>
        <position position="128"/>
    </location>
    <ligand>
        <name>dGMP</name>
        <dbReference type="ChEBI" id="CHEBI:57673"/>
    </ligand>
</feature>
<feature type="binding site" evidence="1">
    <location>
        <position position="155"/>
    </location>
    <ligand>
        <name>dGMP</name>
        <dbReference type="ChEBI" id="CHEBI:57673"/>
    </ligand>
</feature>
<keyword id="KW-0067">ATP-binding</keyword>
<keyword id="KW-0418">Kinase</keyword>
<keyword id="KW-0547">Nucleotide-binding</keyword>
<keyword id="KW-1185">Reference proteome</keyword>
<keyword id="KW-0808">Transferase</keyword>